<reference key="1">
    <citation type="journal article" date="1998" name="Genome Res.">
        <title>Comparative sequence analysis of a gene-rich cluster at human chromosome 12p13 and its syntenic region in mouse chromosome 6.</title>
        <authorList>
            <person name="Ansari-Lari M.A."/>
            <person name="Oeltjen J.C."/>
            <person name="Schwartz S."/>
            <person name="Zhang Z."/>
            <person name="Muzny D.M."/>
            <person name="Lu J."/>
            <person name="Gorrell J.H."/>
            <person name="Chinault A.C."/>
            <person name="Belmont J.W."/>
            <person name="Miller W."/>
            <person name="Gibbs R.A."/>
        </authorList>
    </citation>
    <scope>NUCLEOTIDE SEQUENCE [GENOMIC DNA]</scope>
</reference>
<reference key="2">
    <citation type="journal article" date="2005" name="Science">
        <title>The transcriptional landscape of the mammalian genome.</title>
        <authorList>
            <person name="Carninci P."/>
            <person name="Kasukawa T."/>
            <person name="Katayama S."/>
            <person name="Gough J."/>
            <person name="Frith M.C."/>
            <person name="Maeda N."/>
            <person name="Oyama R."/>
            <person name="Ravasi T."/>
            <person name="Lenhard B."/>
            <person name="Wells C."/>
            <person name="Kodzius R."/>
            <person name="Shimokawa K."/>
            <person name="Bajic V.B."/>
            <person name="Brenner S.E."/>
            <person name="Batalov S."/>
            <person name="Forrest A.R."/>
            <person name="Zavolan M."/>
            <person name="Davis M.J."/>
            <person name="Wilming L.G."/>
            <person name="Aidinis V."/>
            <person name="Allen J.E."/>
            <person name="Ambesi-Impiombato A."/>
            <person name="Apweiler R."/>
            <person name="Aturaliya R.N."/>
            <person name="Bailey T.L."/>
            <person name="Bansal M."/>
            <person name="Baxter L."/>
            <person name="Beisel K.W."/>
            <person name="Bersano T."/>
            <person name="Bono H."/>
            <person name="Chalk A.M."/>
            <person name="Chiu K.P."/>
            <person name="Choudhary V."/>
            <person name="Christoffels A."/>
            <person name="Clutterbuck D.R."/>
            <person name="Crowe M.L."/>
            <person name="Dalla E."/>
            <person name="Dalrymple B.P."/>
            <person name="de Bono B."/>
            <person name="Della Gatta G."/>
            <person name="di Bernardo D."/>
            <person name="Down T."/>
            <person name="Engstrom P."/>
            <person name="Fagiolini M."/>
            <person name="Faulkner G."/>
            <person name="Fletcher C.F."/>
            <person name="Fukushima T."/>
            <person name="Furuno M."/>
            <person name="Futaki S."/>
            <person name="Gariboldi M."/>
            <person name="Georgii-Hemming P."/>
            <person name="Gingeras T.R."/>
            <person name="Gojobori T."/>
            <person name="Green R.E."/>
            <person name="Gustincich S."/>
            <person name="Harbers M."/>
            <person name="Hayashi Y."/>
            <person name="Hensch T.K."/>
            <person name="Hirokawa N."/>
            <person name="Hill D."/>
            <person name="Huminiecki L."/>
            <person name="Iacono M."/>
            <person name="Ikeo K."/>
            <person name="Iwama A."/>
            <person name="Ishikawa T."/>
            <person name="Jakt M."/>
            <person name="Kanapin A."/>
            <person name="Katoh M."/>
            <person name="Kawasawa Y."/>
            <person name="Kelso J."/>
            <person name="Kitamura H."/>
            <person name="Kitano H."/>
            <person name="Kollias G."/>
            <person name="Krishnan S.P."/>
            <person name="Kruger A."/>
            <person name="Kummerfeld S.K."/>
            <person name="Kurochkin I.V."/>
            <person name="Lareau L.F."/>
            <person name="Lazarevic D."/>
            <person name="Lipovich L."/>
            <person name="Liu J."/>
            <person name="Liuni S."/>
            <person name="McWilliam S."/>
            <person name="Madan Babu M."/>
            <person name="Madera M."/>
            <person name="Marchionni L."/>
            <person name="Matsuda H."/>
            <person name="Matsuzawa S."/>
            <person name="Miki H."/>
            <person name="Mignone F."/>
            <person name="Miyake S."/>
            <person name="Morris K."/>
            <person name="Mottagui-Tabar S."/>
            <person name="Mulder N."/>
            <person name="Nakano N."/>
            <person name="Nakauchi H."/>
            <person name="Ng P."/>
            <person name="Nilsson R."/>
            <person name="Nishiguchi S."/>
            <person name="Nishikawa S."/>
            <person name="Nori F."/>
            <person name="Ohara O."/>
            <person name="Okazaki Y."/>
            <person name="Orlando V."/>
            <person name="Pang K.C."/>
            <person name="Pavan W.J."/>
            <person name="Pavesi G."/>
            <person name="Pesole G."/>
            <person name="Petrovsky N."/>
            <person name="Piazza S."/>
            <person name="Reed J."/>
            <person name="Reid J.F."/>
            <person name="Ring B.Z."/>
            <person name="Ringwald M."/>
            <person name="Rost B."/>
            <person name="Ruan Y."/>
            <person name="Salzberg S.L."/>
            <person name="Sandelin A."/>
            <person name="Schneider C."/>
            <person name="Schoenbach C."/>
            <person name="Sekiguchi K."/>
            <person name="Semple C.A."/>
            <person name="Seno S."/>
            <person name="Sessa L."/>
            <person name="Sheng Y."/>
            <person name="Shibata Y."/>
            <person name="Shimada H."/>
            <person name="Shimada K."/>
            <person name="Silva D."/>
            <person name="Sinclair B."/>
            <person name="Sperling S."/>
            <person name="Stupka E."/>
            <person name="Sugiura K."/>
            <person name="Sultana R."/>
            <person name="Takenaka Y."/>
            <person name="Taki K."/>
            <person name="Tammoja K."/>
            <person name="Tan S.L."/>
            <person name="Tang S."/>
            <person name="Taylor M.S."/>
            <person name="Tegner J."/>
            <person name="Teichmann S.A."/>
            <person name="Ueda H.R."/>
            <person name="van Nimwegen E."/>
            <person name="Verardo R."/>
            <person name="Wei C.L."/>
            <person name="Yagi K."/>
            <person name="Yamanishi H."/>
            <person name="Zabarovsky E."/>
            <person name="Zhu S."/>
            <person name="Zimmer A."/>
            <person name="Hide W."/>
            <person name="Bult C."/>
            <person name="Grimmond S.M."/>
            <person name="Teasdale R.D."/>
            <person name="Liu E.T."/>
            <person name="Brusic V."/>
            <person name="Quackenbush J."/>
            <person name="Wahlestedt C."/>
            <person name="Mattick J.S."/>
            <person name="Hume D.A."/>
            <person name="Kai C."/>
            <person name="Sasaki D."/>
            <person name="Tomaru Y."/>
            <person name="Fukuda S."/>
            <person name="Kanamori-Katayama M."/>
            <person name="Suzuki M."/>
            <person name="Aoki J."/>
            <person name="Arakawa T."/>
            <person name="Iida J."/>
            <person name="Imamura K."/>
            <person name="Itoh M."/>
            <person name="Kato T."/>
            <person name="Kawaji H."/>
            <person name="Kawagashira N."/>
            <person name="Kawashima T."/>
            <person name="Kojima M."/>
            <person name="Kondo S."/>
            <person name="Konno H."/>
            <person name="Nakano K."/>
            <person name="Ninomiya N."/>
            <person name="Nishio T."/>
            <person name="Okada M."/>
            <person name="Plessy C."/>
            <person name="Shibata K."/>
            <person name="Shiraki T."/>
            <person name="Suzuki S."/>
            <person name="Tagami M."/>
            <person name="Waki K."/>
            <person name="Watahiki A."/>
            <person name="Okamura-Oho Y."/>
            <person name="Suzuki H."/>
            <person name="Kawai J."/>
            <person name="Hayashizaki Y."/>
        </authorList>
    </citation>
    <scope>NUCLEOTIDE SEQUENCE [LARGE SCALE MRNA]</scope>
    <source>
        <strain>C57BL/6J</strain>
        <tissue>Head</tissue>
    </source>
</reference>
<reference key="3">
    <citation type="journal article" date="2004" name="Genome Res.">
        <title>The status, quality, and expansion of the NIH full-length cDNA project: the Mammalian Gene Collection (MGC).</title>
        <authorList>
            <consortium name="The MGC Project Team"/>
        </authorList>
    </citation>
    <scope>NUCLEOTIDE SEQUENCE [LARGE SCALE MRNA]</scope>
    <source>
        <tissue>Eye</tissue>
    </source>
</reference>
<reference key="4">
    <citation type="submission" date="2007-04" db="UniProtKB">
        <authorList>
            <person name="Lubec G."/>
            <person name="Kang S.U."/>
        </authorList>
    </citation>
    <scope>PROTEIN SEQUENCE OF 69-96</scope>
    <scope>IDENTIFICATION BY MASS SPECTROMETRY</scope>
    <source>
        <strain>C57BL/6J</strain>
        <tissue>Brain</tissue>
    </source>
</reference>
<reference key="5">
    <citation type="journal article" date="1996" name="Mol. Reprod. Dev.">
        <title>G protein gene expression during mouse oocyte growth and maturation, and preimplantation embryo development.</title>
        <authorList>
            <person name="Williams C.J."/>
            <person name="Schultz R.M."/>
            <person name="Kopf G.S."/>
        </authorList>
    </citation>
    <scope>NUCLEOTIDE SEQUENCE [MRNA] OF 199-301</scope>
    <source>
        <strain>CF-1 / Harlan</strain>
        <tissue>Retina</tissue>
    </source>
</reference>
<comment type="function">
    <text>Guanine nucleotide-binding proteins (G proteins) are involved as a modulator or transducer in various transmembrane signaling systems. The beta and gamma chains are required for the GTPase activity, for replacement of GDP by GTP, and for G protein-effector interaction.</text>
</comment>
<comment type="subunit">
    <text evidence="1">G proteins are composed of 3 units, alpha, beta and gamma. Interacts with RASD2 (By similarity).</text>
</comment>
<comment type="similarity">
    <text evidence="2">Belongs to the WD repeat G protein beta family.</text>
</comment>
<dbReference type="EMBL" id="AC002397">
    <property type="protein sequence ID" value="AAC36013.1"/>
    <property type="molecule type" value="Genomic_DNA"/>
</dbReference>
<dbReference type="EMBL" id="AK014789">
    <property type="protein sequence ID" value="BAB29553.1"/>
    <property type="molecule type" value="mRNA"/>
</dbReference>
<dbReference type="EMBL" id="BC018239">
    <property type="protein sequence ID" value="AAH18239.1"/>
    <property type="molecule type" value="mRNA"/>
</dbReference>
<dbReference type="EMBL" id="U38494">
    <property type="protein sequence ID" value="AAB01725.1"/>
    <property type="molecule type" value="mRNA"/>
</dbReference>
<dbReference type="CCDS" id="CCDS20532.1"/>
<dbReference type="RefSeq" id="NP_038558.1">
    <property type="nucleotide sequence ID" value="NM_013530.1"/>
</dbReference>
<dbReference type="SMR" id="Q61011"/>
<dbReference type="BioGRID" id="199979">
    <property type="interactions" value="13"/>
</dbReference>
<dbReference type="FunCoup" id="Q61011">
    <property type="interactions" value="658"/>
</dbReference>
<dbReference type="IntAct" id="Q61011">
    <property type="interactions" value="1"/>
</dbReference>
<dbReference type="MINT" id="Q61011"/>
<dbReference type="STRING" id="10090.ENSMUSP00000024206"/>
<dbReference type="iPTMnet" id="Q61011"/>
<dbReference type="PhosphoSitePlus" id="Q61011"/>
<dbReference type="jPOST" id="Q61011"/>
<dbReference type="PaxDb" id="10090-ENSMUSP00000024206"/>
<dbReference type="ProteomicsDB" id="265729"/>
<dbReference type="Antibodypedia" id="1080">
    <property type="antibodies" value="228 antibodies from 35 providers"/>
</dbReference>
<dbReference type="DNASU" id="14695"/>
<dbReference type="Ensembl" id="ENSMUST00000024206.6">
    <property type="protein sequence ID" value="ENSMUSP00000024206.6"/>
    <property type="gene ID" value="ENSMUSG00000023439.12"/>
</dbReference>
<dbReference type="GeneID" id="14695"/>
<dbReference type="KEGG" id="mmu:14695"/>
<dbReference type="UCSC" id="uc009dsd.1">
    <property type="organism name" value="mouse"/>
</dbReference>
<dbReference type="AGR" id="MGI:95785"/>
<dbReference type="CTD" id="2784"/>
<dbReference type="MGI" id="MGI:95785">
    <property type="gene designation" value="Gnb3"/>
</dbReference>
<dbReference type="VEuPathDB" id="HostDB:ENSMUSG00000023439"/>
<dbReference type="eggNOG" id="KOG0286">
    <property type="taxonomic scope" value="Eukaryota"/>
</dbReference>
<dbReference type="GeneTree" id="ENSGT01000000214413"/>
<dbReference type="HOGENOM" id="CLU_000288_57_34_1"/>
<dbReference type="InParanoid" id="Q61011"/>
<dbReference type="OMA" id="VYSHETI"/>
<dbReference type="OrthoDB" id="10255630at2759"/>
<dbReference type="PhylomeDB" id="Q61011"/>
<dbReference type="TreeFam" id="TF106149"/>
<dbReference type="Reactome" id="R-MMU-1296041">
    <property type="pathway name" value="Activation of G protein gated Potassium channels"/>
</dbReference>
<dbReference type="Reactome" id="R-MMU-202040">
    <property type="pathway name" value="G-protein activation"/>
</dbReference>
<dbReference type="Reactome" id="R-MMU-381676">
    <property type="pathway name" value="Glucagon-like Peptide-1 (GLP1) regulates insulin secretion"/>
</dbReference>
<dbReference type="Reactome" id="R-MMU-381771">
    <property type="pathway name" value="Synthesis, secretion, and inactivation of Glucagon-like Peptide-1 (GLP-1)"/>
</dbReference>
<dbReference type="Reactome" id="R-MMU-392170">
    <property type="pathway name" value="ADP signalling through P2Y purinoceptor 12"/>
</dbReference>
<dbReference type="Reactome" id="R-MMU-392451">
    <property type="pathway name" value="G beta:gamma signalling through PI3Kgamma"/>
</dbReference>
<dbReference type="Reactome" id="R-MMU-392851">
    <property type="pathway name" value="Prostacyclin signalling through prostacyclin receptor"/>
</dbReference>
<dbReference type="Reactome" id="R-MMU-400042">
    <property type="pathway name" value="Adrenaline,noradrenaline inhibits insulin secretion"/>
</dbReference>
<dbReference type="Reactome" id="R-MMU-4086398">
    <property type="pathway name" value="Ca2+ pathway"/>
</dbReference>
<dbReference type="Reactome" id="R-MMU-416476">
    <property type="pathway name" value="G alpha (q) signalling events"/>
</dbReference>
<dbReference type="Reactome" id="R-MMU-416482">
    <property type="pathway name" value="G alpha (12/13) signalling events"/>
</dbReference>
<dbReference type="Reactome" id="R-MMU-418217">
    <property type="pathway name" value="G beta:gamma signalling through PLC beta"/>
</dbReference>
<dbReference type="Reactome" id="R-MMU-418555">
    <property type="pathway name" value="G alpha (s) signalling events"/>
</dbReference>
<dbReference type="Reactome" id="R-MMU-418592">
    <property type="pathway name" value="ADP signalling through P2Y purinoceptor 1"/>
</dbReference>
<dbReference type="Reactome" id="R-MMU-418594">
    <property type="pathway name" value="G alpha (i) signalling events"/>
</dbReference>
<dbReference type="Reactome" id="R-MMU-418597">
    <property type="pathway name" value="G alpha (z) signalling events"/>
</dbReference>
<dbReference type="Reactome" id="R-MMU-420092">
    <property type="pathway name" value="Glucagon-type ligand receptors"/>
</dbReference>
<dbReference type="Reactome" id="R-MMU-428930">
    <property type="pathway name" value="Thromboxane signalling through TP receptor"/>
</dbReference>
<dbReference type="Reactome" id="R-MMU-432040">
    <property type="pathway name" value="Vasopressin regulates renal water homeostasis via Aquaporins"/>
</dbReference>
<dbReference type="Reactome" id="R-MMU-456926">
    <property type="pathway name" value="Thrombin signalling through proteinase activated receptors (PARs)"/>
</dbReference>
<dbReference type="Reactome" id="R-MMU-500657">
    <property type="pathway name" value="Presynaptic function of Kainate receptors"/>
</dbReference>
<dbReference type="Reactome" id="R-MMU-6814122">
    <property type="pathway name" value="Cooperation of PDCL (PhLP1) and TRiC/CCT in G-protein beta folding"/>
</dbReference>
<dbReference type="Reactome" id="R-MMU-8964315">
    <property type="pathway name" value="G beta:gamma signalling through BTK"/>
</dbReference>
<dbReference type="Reactome" id="R-MMU-8964616">
    <property type="pathway name" value="G beta:gamma signalling through CDC42"/>
</dbReference>
<dbReference type="Reactome" id="R-MMU-9009391">
    <property type="pathway name" value="Extra-nuclear estrogen signaling"/>
</dbReference>
<dbReference type="Reactome" id="R-MMU-9634597">
    <property type="pathway name" value="GPER1 signaling"/>
</dbReference>
<dbReference type="Reactome" id="R-MMU-9717207">
    <property type="pathway name" value="Sensory perception of sweet, bitter, and umami (glutamate) taste"/>
</dbReference>
<dbReference type="Reactome" id="R-MMU-9856530">
    <property type="pathway name" value="High laminar flow shear stress activates signaling by PIEZO1 and PECAM1:CDH5:KDR in endothelial cells"/>
</dbReference>
<dbReference type="Reactome" id="R-MMU-997272">
    <property type="pathway name" value="Inhibition of voltage gated Ca2+ channels via Gbeta/gamma subunits"/>
</dbReference>
<dbReference type="BioGRID-ORCS" id="14695">
    <property type="hits" value="1 hit in 80 CRISPR screens"/>
</dbReference>
<dbReference type="CD-CODE" id="CE726F99">
    <property type="entry name" value="Postsynaptic density"/>
</dbReference>
<dbReference type="ChiTaRS" id="Gnb3">
    <property type="organism name" value="mouse"/>
</dbReference>
<dbReference type="PRO" id="PR:Q61011"/>
<dbReference type="Proteomes" id="UP000000589">
    <property type="component" value="Chromosome 6"/>
</dbReference>
<dbReference type="RNAct" id="Q61011">
    <property type="molecule type" value="protein"/>
</dbReference>
<dbReference type="Bgee" id="ENSMUSG00000023439">
    <property type="expression patterns" value="Expressed in retinal neural layer and 56 other cell types or tissues"/>
</dbReference>
<dbReference type="ExpressionAtlas" id="Q61011">
    <property type="expression patterns" value="baseline and differential"/>
</dbReference>
<dbReference type="GO" id="GO:0044297">
    <property type="term" value="C:cell body"/>
    <property type="evidence" value="ECO:0007669"/>
    <property type="project" value="Ensembl"/>
</dbReference>
<dbReference type="GO" id="GO:0030425">
    <property type="term" value="C:dendrite"/>
    <property type="evidence" value="ECO:0000314"/>
    <property type="project" value="MGI"/>
</dbReference>
<dbReference type="GO" id="GO:0005834">
    <property type="term" value="C:heterotrimeric G-protein complex"/>
    <property type="evidence" value="ECO:0000353"/>
    <property type="project" value="MGI"/>
</dbReference>
<dbReference type="GO" id="GO:0003924">
    <property type="term" value="F:GTPase activity"/>
    <property type="evidence" value="ECO:0000304"/>
    <property type="project" value="MGI"/>
</dbReference>
<dbReference type="GO" id="GO:0051020">
    <property type="term" value="F:GTPase binding"/>
    <property type="evidence" value="ECO:0007669"/>
    <property type="project" value="Ensembl"/>
</dbReference>
<dbReference type="GO" id="GO:0030507">
    <property type="term" value="F:spectrin binding"/>
    <property type="evidence" value="ECO:0000266"/>
    <property type="project" value="MGI"/>
</dbReference>
<dbReference type="GO" id="GO:0006884">
    <property type="term" value="P:cell volume homeostasis"/>
    <property type="evidence" value="ECO:0007669"/>
    <property type="project" value="Ensembl"/>
</dbReference>
<dbReference type="GO" id="GO:0007186">
    <property type="term" value="P:G protein-coupled receptor signaling pathway"/>
    <property type="evidence" value="ECO:0000304"/>
    <property type="project" value="MGI"/>
</dbReference>
<dbReference type="GO" id="GO:0090181">
    <property type="term" value="P:regulation of cholesterol metabolic process"/>
    <property type="evidence" value="ECO:0007669"/>
    <property type="project" value="Ensembl"/>
</dbReference>
<dbReference type="GO" id="GO:0045598">
    <property type="term" value="P:regulation of fat cell differentiation"/>
    <property type="evidence" value="ECO:0007669"/>
    <property type="project" value="Ensembl"/>
</dbReference>
<dbReference type="GO" id="GO:0010468">
    <property type="term" value="P:regulation of gene expression"/>
    <property type="evidence" value="ECO:0007669"/>
    <property type="project" value="Ensembl"/>
</dbReference>
<dbReference type="GO" id="GO:0010906">
    <property type="term" value="P:regulation of glucose metabolic process"/>
    <property type="evidence" value="ECO:0007669"/>
    <property type="project" value="Ensembl"/>
</dbReference>
<dbReference type="GO" id="GO:0032350">
    <property type="term" value="P:regulation of hormone metabolic process"/>
    <property type="evidence" value="ECO:0007669"/>
    <property type="project" value="Ensembl"/>
</dbReference>
<dbReference type="GO" id="GO:1903725">
    <property type="term" value="P:regulation of phospholipid metabolic process"/>
    <property type="evidence" value="ECO:0007669"/>
    <property type="project" value="Ensembl"/>
</dbReference>
<dbReference type="GO" id="GO:0090207">
    <property type="term" value="P:regulation of triglyceride metabolic process"/>
    <property type="evidence" value="ECO:0007669"/>
    <property type="project" value="Ensembl"/>
</dbReference>
<dbReference type="CDD" id="cd00200">
    <property type="entry name" value="WD40"/>
    <property type="match status" value="1"/>
</dbReference>
<dbReference type="FunFam" id="2.130.10.10:FF:000007">
    <property type="entry name" value="Guanine nucleotide-binding protein G(I)/G(S)/G(T) subunit beta-1"/>
    <property type="match status" value="1"/>
</dbReference>
<dbReference type="Gene3D" id="2.130.10.10">
    <property type="entry name" value="YVTN repeat-like/Quinoprotein amine dehydrogenase"/>
    <property type="match status" value="1"/>
</dbReference>
<dbReference type="InterPro" id="IPR020472">
    <property type="entry name" value="G-protein_beta_WD-40_rep"/>
</dbReference>
<dbReference type="InterPro" id="IPR001632">
    <property type="entry name" value="Gprotein_B"/>
</dbReference>
<dbReference type="InterPro" id="IPR016346">
    <property type="entry name" value="Guanine_nucleotide-bd_bsu"/>
</dbReference>
<dbReference type="InterPro" id="IPR015943">
    <property type="entry name" value="WD40/YVTN_repeat-like_dom_sf"/>
</dbReference>
<dbReference type="InterPro" id="IPR019775">
    <property type="entry name" value="WD40_repeat_CS"/>
</dbReference>
<dbReference type="InterPro" id="IPR036322">
    <property type="entry name" value="WD40_repeat_dom_sf"/>
</dbReference>
<dbReference type="InterPro" id="IPR001680">
    <property type="entry name" value="WD40_rpt"/>
</dbReference>
<dbReference type="PANTHER" id="PTHR19850">
    <property type="entry name" value="GUANINE NUCLEOTIDE-BINDING PROTEIN BETA G PROTEIN BETA"/>
    <property type="match status" value="1"/>
</dbReference>
<dbReference type="Pfam" id="PF25391">
    <property type="entry name" value="WD40_Gbeta"/>
    <property type="match status" value="1"/>
</dbReference>
<dbReference type="PIRSF" id="PIRSF002394">
    <property type="entry name" value="GN-bd_beta"/>
    <property type="match status" value="1"/>
</dbReference>
<dbReference type="PRINTS" id="PR00319">
    <property type="entry name" value="GPROTEINB"/>
</dbReference>
<dbReference type="PRINTS" id="PR00320">
    <property type="entry name" value="GPROTEINBRPT"/>
</dbReference>
<dbReference type="SMART" id="SM00320">
    <property type="entry name" value="WD40"/>
    <property type="match status" value="7"/>
</dbReference>
<dbReference type="SUPFAM" id="SSF50978">
    <property type="entry name" value="WD40 repeat-like"/>
    <property type="match status" value="1"/>
</dbReference>
<dbReference type="PROSITE" id="PS00678">
    <property type="entry name" value="WD_REPEATS_1"/>
    <property type="match status" value="3"/>
</dbReference>
<dbReference type="PROSITE" id="PS50082">
    <property type="entry name" value="WD_REPEATS_2"/>
    <property type="match status" value="5"/>
</dbReference>
<dbReference type="PROSITE" id="PS50294">
    <property type="entry name" value="WD_REPEATS_REGION"/>
    <property type="match status" value="1"/>
</dbReference>
<organism>
    <name type="scientific">Mus musculus</name>
    <name type="common">Mouse</name>
    <dbReference type="NCBI Taxonomy" id="10090"/>
    <lineage>
        <taxon>Eukaryota</taxon>
        <taxon>Metazoa</taxon>
        <taxon>Chordata</taxon>
        <taxon>Craniata</taxon>
        <taxon>Vertebrata</taxon>
        <taxon>Euteleostomi</taxon>
        <taxon>Mammalia</taxon>
        <taxon>Eutheria</taxon>
        <taxon>Euarchontoglires</taxon>
        <taxon>Glires</taxon>
        <taxon>Rodentia</taxon>
        <taxon>Myomorpha</taxon>
        <taxon>Muroidea</taxon>
        <taxon>Muridae</taxon>
        <taxon>Murinae</taxon>
        <taxon>Mus</taxon>
        <taxon>Mus</taxon>
    </lineage>
</organism>
<proteinExistence type="evidence at protein level"/>
<sequence length="340" mass="37240">MGEMEQLRQEAEQLKKQIADARKACADITLAELVSGLEVVGRVQMRTRRTLRGHLAKIYAMHWATDSKLLVSASQDGKLIVWDTYTTNKVHAIPLRSSWVMTCAYAPSGNFVACGGLDNMCSIYNLKSREGNVKVSRELSAHTGYLSCCRFLDDNNIVTSSGDTTCALWDIETGQQKTVFVGHTGDCMSLAVSPDYKLFISGACDASAKLWDVREGTCRQTFTGHESDINAICFFPNGEAICTGSDDASCRLFDLRADQELTAYSQESIICGITSVAFSLSGRLLFAGYDDFNCNVWDSLKCERVGILSGHDNRVSCLGVTADGMAVATGSWDSFLKIWN</sequence>
<gene>
    <name type="primary">Gnb3</name>
</gene>
<name>GBB3_MOUSE</name>
<accession>Q61011</accession>
<evidence type="ECO:0000250" key="1"/>
<evidence type="ECO:0000305" key="2"/>
<keyword id="KW-0903">Direct protein sequencing</keyword>
<keyword id="KW-1185">Reference proteome</keyword>
<keyword id="KW-0677">Repeat</keyword>
<keyword id="KW-0807">Transducer</keyword>
<keyword id="KW-0853">WD repeat</keyword>
<protein>
    <recommendedName>
        <fullName>Guanine nucleotide-binding protein G(I)/G(S)/G(T) subunit beta-3</fullName>
    </recommendedName>
    <alternativeName>
        <fullName>Transducin beta chain 3</fullName>
    </alternativeName>
</protein>
<feature type="chain" id="PRO_0000127700" description="Guanine nucleotide-binding protein G(I)/G(S)/G(T) subunit beta-3">
    <location>
        <begin position="1"/>
        <end position="340"/>
    </location>
</feature>
<feature type="repeat" description="WD 1">
    <location>
        <begin position="53"/>
        <end position="83"/>
    </location>
</feature>
<feature type="repeat" description="WD 2">
    <location>
        <begin position="95"/>
        <end position="125"/>
    </location>
</feature>
<feature type="repeat" description="WD 3">
    <location>
        <begin position="141"/>
        <end position="170"/>
    </location>
</feature>
<feature type="repeat" description="WD 4">
    <location>
        <begin position="182"/>
        <end position="212"/>
    </location>
</feature>
<feature type="repeat" description="WD 5">
    <location>
        <begin position="224"/>
        <end position="254"/>
    </location>
</feature>
<feature type="repeat" description="WD 6">
    <location>
        <begin position="268"/>
        <end position="298"/>
    </location>
</feature>
<feature type="repeat" description="WD 7">
    <location>
        <begin position="310"/>
        <end position="340"/>
    </location>
</feature>